<feature type="chain" id="PRO_1000062552" description="Urease accessory protein UreE">
    <location>
        <begin position="1"/>
        <end position="149"/>
    </location>
</feature>
<dbReference type="EMBL" id="CP000111">
    <property type="protein sequence ID" value="ABB49892.1"/>
    <property type="molecule type" value="Genomic_DNA"/>
</dbReference>
<dbReference type="RefSeq" id="WP_011376387.1">
    <property type="nucleotide sequence ID" value="NC_007577.1"/>
</dbReference>
<dbReference type="SMR" id="Q31B53"/>
<dbReference type="STRING" id="74546.PMT9312_0832"/>
<dbReference type="KEGG" id="pmi:PMT9312_0832"/>
<dbReference type="eggNOG" id="COG2371">
    <property type="taxonomic scope" value="Bacteria"/>
</dbReference>
<dbReference type="HOGENOM" id="CLU_093757_2_0_3"/>
<dbReference type="OrthoDB" id="5421304at2"/>
<dbReference type="Proteomes" id="UP000002715">
    <property type="component" value="Chromosome"/>
</dbReference>
<dbReference type="GO" id="GO:0005737">
    <property type="term" value="C:cytoplasm"/>
    <property type="evidence" value="ECO:0007669"/>
    <property type="project" value="UniProtKB-SubCell"/>
</dbReference>
<dbReference type="GO" id="GO:0016151">
    <property type="term" value="F:nickel cation binding"/>
    <property type="evidence" value="ECO:0007669"/>
    <property type="project" value="UniProtKB-UniRule"/>
</dbReference>
<dbReference type="GO" id="GO:0051082">
    <property type="term" value="F:unfolded protein binding"/>
    <property type="evidence" value="ECO:0007669"/>
    <property type="project" value="UniProtKB-UniRule"/>
</dbReference>
<dbReference type="GO" id="GO:0006457">
    <property type="term" value="P:protein folding"/>
    <property type="evidence" value="ECO:0007669"/>
    <property type="project" value="InterPro"/>
</dbReference>
<dbReference type="GO" id="GO:0065003">
    <property type="term" value="P:protein-containing complex assembly"/>
    <property type="evidence" value="ECO:0007669"/>
    <property type="project" value="InterPro"/>
</dbReference>
<dbReference type="GO" id="GO:0019627">
    <property type="term" value="P:urea metabolic process"/>
    <property type="evidence" value="ECO:0007669"/>
    <property type="project" value="InterPro"/>
</dbReference>
<dbReference type="CDD" id="cd00571">
    <property type="entry name" value="UreE"/>
    <property type="match status" value="1"/>
</dbReference>
<dbReference type="Gene3D" id="2.60.260.20">
    <property type="entry name" value="Urease metallochaperone UreE, N-terminal domain"/>
    <property type="match status" value="1"/>
</dbReference>
<dbReference type="Gene3D" id="3.30.70.790">
    <property type="entry name" value="UreE, C-terminal domain"/>
    <property type="match status" value="1"/>
</dbReference>
<dbReference type="HAMAP" id="MF_00822">
    <property type="entry name" value="UreE"/>
    <property type="match status" value="1"/>
</dbReference>
<dbReference type="InterPro" id="IPR012406">
    <property type="entry name" value="UreE"/>
</dbReference>
<dbReference type="InterPro" id="IPR007864">
    <property type="entry name" value="UreE_C_dom"/>
</dbReference>
<dbReference type="InterPro" id="IPR004029">
    <property type="entry name" value="UreE_N"/>
</dbReference>
<dbReference type="InterPro" id="IPR036118">
    <property type="entry name" value="UreE_N_sf"/>
</dbReference>
<dbReference type="NCBIfam" id="NF009756">
    <property type="entry name" value="PRK13261.2-2"/>
    <property type="match status" value="1"/>
</dbReference>
<dbReference type="Pfam" id="PF05194">
    <property type="entry name" value="UreE_C"/>
    <property type="match status" value="1"/>
</dbReference>
<dbReference type="Pfam" id="PF02814">
    <property type="entry name" value="UreE_N"/>
    <property type="match status" value="1"/>
</dbReference>
<dbReference type="PIRSF" id="PIRSF036402">
    <property type="entry name" value="Ureas_acces_UreE"/>
    <property type="match status" value="1"/>
</dbReference>
<dbReference type="SMART" id="SM00988">
    <property type="entry name" value="UreE_N"/>
    <property type="match status" value="1"/>
</dbReference>
<dbReference type="SUPFAM" id="SSF69737">
    <property type="entry name" value="Urease metallochaperone UreE, C-terminal domain"/>
    <property type="match status" value="1"/>
</dbReference>
<dbReference type="SUPFAM" id="SSF69287">
    <property type="entry name" value="Urease metallochaperone UreE, N-terminal domain"/>
    <property type="match status" value="1"/>
</dbReference>
<comment type="function">
    <text evidence="1">Involved in urease metallocenter assembly. Binds nickel. Probably functions as a nickel donor during metallocenter assembly.</text>
</comment>
<comment type="subcellular location">
    <subcellularLocation>
        <location evidence="1">Cytoplasm</location>
    </subcellularLocation>
</comment>
<comment type="similarity">
    <text evidence="1">Belongs to the UreE family.</text>
</comment>
<evidence type="ECO:0000255" key="1">
    <source>
        <dbReference type="HAMAP-Rule" id="MF_00822"/>
    </source>
</evidence>
<accession>Q31B53</accession>
<gene>
    <name evidence="1" type="primary">ureE</name>
    <name type="ordered locus">PMT9312_0832</name>
</gene>
<protein>
    <recommendedName>
        <fullName evidence="1">Urease accessory protein UreE</fullName>
    </recommendedName>
</protein>
<keyword id="KW-0143">Chaperone</keyword>
<keyword id="KW-0963">Cytoplasm</keyword>
<keyword id="KW-0533">Nickel</keyword>
<keyword id="KW-0996">Nickel insertion</keyword>
<sequence length="149" mass="17242">MRMNKQIVVTDWIKEKPRLGSFLKLTLTSDERKILRGKRLTDCDQEIILQLPRNGKLNDGDILSTNESNFYVEIIAKTEDLIEISSNSKNELIKTAYHLGNRHVEVEIEEDILLTKSDYVIENMLKNFKVDIVNTQKKFSPEKGAHSHD</sequence>
<reference key="1">
    <citation type="journal article" date="2006" name="Science">
        <title>Genomic islands and the ecology and evolution of Prochlorococcus.</title>
        <authorList>
            <person name="Coleman M.L."/>
            <person name="Sullivan M.B."/>
            <person name="Martiny A.C."/>
            <person name="Steglich C."/>
            <person name="Barry K."/>
            <person name="Delong E.F."/>
            <person name="Chisholm S.W."/>
        </authorList>
    </citation>
    <scope>NUCLEOTIDE SEQUENCE [LARGE SCALE GENOMIC DNA]</scope>
    <source>
        <strain>MIT 9312</strain>
    </source>
</reference>
<organism>
    <name type="scientific">Prochlorococcus marinus (strain MIT 9312)</name>
    <dbReference type="NCBI Taxonomy" id="74546"/>
    <lineage>
        <taxon>Bacteria</taxon>
        <taxon>Bacillati</taxon>
        <taxon>Cyanobacteriota</taxon>
        <taxon>Cyanophyceae</taxon>
        <taxon>Synechococcales</taxon>
        <taxon>Prochlorococcaceae</taxon>
        <taxon>Prochlorococcus</taxon>
    </lineage>
</organism>
<name>UREE_PROM9</name>
<proteinExistence type="inferred from homology"/>